<reference key="1">
    <citation type="journal article" date="1996" name="Nucleic Acids Res.">
        <title>Complete sequence analysis of the genome of the bacterium Mycoplasma pneumoniae.</title>
        <authorList>
            <person name="Himmelreich R."/>
            <person name="Hilbert H."/>
            <person name="Plagens H."/>
            <person name="Pirkl E."/>
            <person name="Li B.-C."/>
            <person name="Herrmann R."/>
        </authorList>
    </citation>
    <scope>NUCLEOTIDE SEQUENCE [LARGE SCALE GENOMIC DNA]</scope>
    <source>
        <strain>ATCC 29342 / M129 / Subtype 1</strain>
    </source>
</reference>
<protein>
    <recommendedName>
        <fullName evidence="1">Cytidylate kinase</fullName>
        <shortName evidence="1">CK</shortName>
        <ecNumber evidence="1">2.7.4.25</ecNumber>
    </recommendedName>
    <alternativeName>
        <fullName evidence="1">Cytidine monophosphate kinase</fullName>
        <shortName evidence="1">CMP kinase</shortName>
    </alternativeName>
</protein>
<evidence type="ECO:0000255" key="1">
    <source>
        <dbReference type="HAMAP-Rule" id="MF_00238"/>
    </source>
</evidence>
<name>KCY_MYCPN</name>
<organism>
    <name type="scientific">Mycoplasma pneumoniae (strain ATCC 29342 / M129 / Subtype 1)</name>
    <name type="common">Mycoplasmoides pneumoniae</name>
    <dbReference type="NCBI Taxonomy" id="272634"/>
    <lineage>
        <taxon>Bacteria</taxon>
        <taxon>Bacillati</taxon>
        <taxon>Mycoplasmatota</taxon>
        <taxon>Mycoplasmoidales</taxon>
        <taxon>Mycoplasmoidaceae</taxon>
        <taxon>Mycoplasmoides</taxon>
    </lineage>
</organism>
<gene>
    <name evidence="1" type="primary">cmk</name>
    <name type="ordered locus">MPN_476</name>
    <name type="ORF">MP365</name>
</gene>
<proteinExistence type="inferred from homology"/>
<feature type="chain" id="PRO_0000131941" description="Cytidylate kinase">
    <location>
        <begin position="1"/>
        <end position="217"/>
    </location>
</feature>
<feature type="binding site" evidence="1">
    <location>
        <begin position="9"/>
        <end position="17"/>
    </location>
    <ligand>
        <name>ATP</name>
        <dbReference type="ChEBI" id="CHEBI:30616"/>
    </ligand>
</feature>
<sequence length="217" mass="24567">MYFQIAIDGPSSSGKSSVAKTVARQLGFEYFSTGKMYRAFAYVMQVNRLDVNLLLKVINQINWRFEHEKVFYNNADISEVILNQEIAQLASNLATNPEVRKMAVLRQQALAKNTNIVMDGRDIGTVVLKDAQLKYFLDAKPEIRAQRRAQDLGIAYDSDKAFQELVAEIKHRDAVDTSRTADPLVQAPDAIYIDSSNLTFQQVVELMVQQARTVFKL</sequence>
<accession>P75308</accession>
<keyword id="KW-0067">ATP-binding</keyword>
<keyword id="KW-0963">Cytoplasm</keyword>
<keyword id="KW-0418">Kinase</keyword>
<keyword id="KW-0547">Nucleotide-binding</keyword>
<keyword id="KW-1185">Reference proteome</keyword>
<keyword id="KW-0808">Transferase</keyword>
<comment type="catalytic activity">
    <reaction evidence="1">
        <text>CMP + ATP = CDP + ADP</text>
        <dbReference type="Rhea" id="RHEA:11600"/>
        <dbReference type="ChEBI" id="CHEBI:30616"/>
        <dbReference type="ChEBI" id="CHEBI:58069"/>
        <dbReference type="ChEBI" id="CHEBI:60377"/>
        <dbReference type="ChEBI" id="CHEBI:456216"/>
        <dbReference type="EC" id="2.7.4.25"/>
    </reaction>
</comment>
<comment type="catalytic activity">
    <reaction evidence="1">
        <text>dCMP + ATP = dCDP + ADP</text>
        <dbReference type="Rhea" id="RHEA:25094"/>
        <dbReference type="ChEBI" id="CHEBI:30616"/>
        <dbReference type="ChEBI" id="CHEBI:57566"/>
        <dbReference type="ChEBI" id="CHEBI:58593"/>
        <dbReference type="ChEBI" id="CHEBI:456216"/>
        <dbReference type="EC" id="2.7.4.25"/>
    </reaction>
</comment>
<comment type="subcellular location">
    <subcellularLocation>
        <location evidence="1">Cytoplasm</location>
    </subcellularLocation>
</comment>
<comment type="similarity">
    <text evidence="1">Belongs to the cytidylate kinase family. Type 1 subfamily.</text>
</comment>
<dbReference type="EC" id="2.7.4.25" evidence="1"/>
<dbReference type="EMBL" id="U00089">
    <property type="protein sequence ID" value="AAB96013.1"/>
    <property type="molecule type" value="Genomic_DNA"/>
</dbReference>
<dbReference type="PIR" id="S73691">
    <property type="entry name" value="S73691"/>
</dbReference>
<dbReference type="RefSeq" id="NP_110164.1">
    <property type="nucleotide sequence ID" value="NC_000912.1"/>
</dbReference>
<dbReference type="RefSeq" id="WP_010874832.1">
    <property type="nucleotide sequence ID" value="NZ_OU342337.1"/>
</dbReference>
<dbReference type="SMR" id="P75308"/>
<dbReference type="IntAct" id="P75308">
    <property type="interactions" value="1"/>
</dbReference>
<dbReference type="STRING" id="272634.MPN_476"/>
<dbReference type="EnsemblBacteria" id="AAB96013">
    <property type="protein sequence ID" value="AAB96013"/>
    <property type="gene ID" value="MPN_476"/>
</dbReference>
<dbReference type="GeneID" id="66608851"/>
<dbReference type="KEGG" id="mpn:MPN_476"/>
<dbReference type="PATRIC" id="fig|272634.6.peg.515"/>
<dbReference type="HOGENOM" id="CLU_079959_0_2_14"/>
<dbReference type="OrthoDB" id="9807434at2"/>
<dbReference type="BioCyc" id="MetaCyc:MONOMER-573"/>
<dbReference type="BioCyc" id="MPNE272634:G1GJ3-782-MONOMER"/>
<dbReference type="Proteomes" id="UP000000808">
    <property type="component" value="Chromosome"/>
</dbReference>
<dbReference type="GO" id="GO:0005829">
    <property type="term" value="C:cytosol"/>
    <property type="evidence" value="ECO:0007669"/>
    <property type="project" value="TreeGrafter"/>
</dbReference>
<dbReference type="GO" id="GO:0005524">
    <property type="term" value="F:ATP binding"/>
    <property type="evidence" value="ECO:0007669"/>
    <property type="project" value="UniProtKB-UniRule"/>
</dbReference>
<dbReference type="GO" id="GO:0036430">
    <property type="term" value="F:CMP kinase activity"/>
    <property type="evidence" value="ECO:0007669"/>
    <property type="project" value="RHEA"/>
</dbReference>
<dbReference type="GO" id="GO:0036431">
    <property type="term" value="F:dCMP kinase activity"/>
    <property type="evidence" value="ECO:0007669"/>
    <property type="project" value="RHEA"/>
</dbReference>
<dbReference type="GO" id="GO:0015949">
    <property type="term" value="P:nucleobase-containing small molecule interconversion"/>
    <property type="evidence" value="ECO:0007669"/>
    <property type="project" value="TreeGrafter"/>
</dbReference>
<dbReference type="GO" id="GO:0006220">
    <property type="term" value="P:pyrimidine nucleotide metabolic process"/>
    <property type="evidence" value="ECO:0007669"/>
    <property type="project" value="UniProtKB-UniRule"/>
</dbReference>
<dbReference type="CDD" id="cd02020">
    <property type="entry name" value="CMPK"/>
    <property type="match status" value="1"/>
</dbReference>
<dbReference type="Gene3D" id="3.40.50.300">
    <property type="entry name" value="P-loop containing nucleotide triphosphate hydrolases"/>
    <property type="match status" value="1"/>
</dbReference>
<dbReference type="HAMAP" id="MF_00238">
    <property type="entry name" value="Cytidyl_kinase_type1"/>
    <property type="match status" value="1"/>
</dbReference>
<dbReference type="InterPro" id="IPR003136">
    <property type="entry name" value="Cytidylate_kin"/>
</dbReference>
<dbReference type="InterPro" id="IPR011994">
    <property type="entry name" value="Cytidylate_kinase_dom"/>
</dbReference>
<dbReference type="InterPro" id="IPR027417">
    <property type="entry name" value="P-loop_NTPase"/>
</dbReference>
<dbReference type="NCBIfam" id="TIGR00017">
    <property type="entry name" value="cmk"/>
    <property type="match status" value="1"/>
</dbReference>
<dbReference type="PANTHER" id="PTHR21299:SF2">
    <property type="entry name" value="CYTIDYLATE KINASE"/>
    <property type="match status" value="1"/>
</dbReference>
<dbReference type="PANTHER" id="PTHR21299">
    <property type="entry name" value="CYTIDYLATE KINASE/PANTOATE-BETA-ALANINE LIGASE"/>
    <property type="match status" value="1"/>
</dbReference>
<dbReference type="Pfam" id="PF02224">
    <property type="entry name" value="Cytidylate_kin"/>
    <property type="match status" value="1"/>
</dbReference>
<dbReference type="SUPFAM" id="SSF52540">
    <property type="entry name" value="P-loop containing nucleoside triphosphate hydrolases"/>
    <property type="match status" value="1"/>
</dbReference>